<protein>
    <recommendedName>
        <fullName evidence="1">Guanosine-5'-triphosphate,3'-diphosphate pyrophosphatase</fullName>
        <ecNumber evidence="1">3.6.1.40</ecNumber>
    </recommendedName>
    <alternativeName>
        <fullName evidence="1">Guanosine pentaphosphate phosphohydrolase</fullName>
    </alternativeName>
    <alternativeName>
        <fullName evidence="1">pppGpp-5'-phosphohydrolase</fullName>
    </alternativeName>
</protein>
<feature type="chain" id="PRO_0000314496" description="Guanosine-5'-triphosphate,3'-diphosphate pyrophosphatase">
    <location>
        <begin position="1"/>
        <end position="503"/>
    </location>
</feature>
<gene>
    <name evidence="1" type="primary">gppA</name>
    <name type="ordered locus">Patl_4220</name>
</gene>
<accession>Q15N19</accession>
<comment type="function">
    <text evidence="1">Catalyzes the conversion of pppGpp to ppGpp. Guanosine pentaphosphate (pppGpp) is a cytoplasmic signaling molecule which together with ppGpp controls the 'stringent response', an adaptive process that allows bacteria to respond to amino acid starvation, resulting in the coordinated regulation of numerous cellular activities.</text>
</comment>
<comment type="catalytic activity">
    <reaction evidence="1">
        <text>guanosine 3'-diphosphate 5'-triphosphate + H2O = guanosine 3',5'-bis(diphosphate) + phosphate + H(+)</text>
        <dbReference type="Rhea" id="RHEA:13073"/>
        <dbReference type="ChEBI" id="CHEBI:15377"/>
        <dbReference type="ChEBI" id="CHEBI:15378"/>
        <dbReference type="ChEBI" id="CHEBI:43474"/>
        <dbReference type="ChEBI" id="CHEBI:77828"/>
        <dbReference type="ChEBI" id="CHEBI:142410"/>
        <dbReference type="EC" id="3.6.1.40"/>
    </reaction>
</comment>
<comment type="pathway">
    <text evidence="1">Purine metabolism; ppGpp biosynthesis; ppGpp from GTP: step 2/2.</text>
</comment>
<comment type="similarity">
    <text evidence="1 2">Belongs to the GppA/Ppx family. GppA subfamily.</text>
</comment>
<reference key="1">
    <citation type="submission" date="2006-06" db="EMBL/GenBank/DDBJ databases">
        <title>Complete sequence of Pseudoalteromonas atlantica T6c.</title>
        <authorList>
            <consortium name="US DOE Joint Genome Institute"/>
            <person name="Copeland A."/>
            <person name="Lucas S."/>
            <person name="Lapidus A."/>
            <person name="Barry K."/>
            <person name="Detter J.C."/>
            <person name="Glavina del Rio T."/>
            <person name="Hammon N."/>
            <person name="Israni S."/>
            <person name="Dalin E."/>
            <person name="Tice H."/>
            <person name="Pitluck S."/>
            <person name="Saunders E."/>
            <person name="Brettin T."/>
            <person name="Bruce D."/>
            <person name="Han C."/>
            <person name="Tapia R."/>
            <person name="Gilna P."/>
            <person name="Schmutz J."/>
            <person name="Larimer F."/>
            <person name="Land M."/>
            <person name="Hauser L."/>
            <person name="Kyrpides N."/>
            <person name="Kim E."/>
            <person name="Karls A.C."/>
            <person name="Bartlett D."/>
            <person name="Higgins B.P."/>
            <person name="Richardson P."/>
        </authorList>
    </citation>
    <scope>NUCLEOTIDE SEQUENCE [LARGE SCALE GENOMIC DNA]</scope>
    <source>
        <strain>T6c / ATCC BAA-1087</strain>
    </source>
</reference>
<name>GPPA_PSEA6</name>
<evidence type="ECO:0000255" key="1">
    <source>
        <dbReference type="HAMAP-Rule" id="MF_01550"/>
    </source>
</evidence>
<evidence type="ECO:0000305" key="2"/>
<organism>
    <name type="scientific">Pseudoalteromonas atlantica (strain T6c / ATCC BAA-1087)</name>
    <dbReference type="NCBI Taxonomy" id="3042615"/>
    <lineage>
        <taxon>Bacteria</taxon>
        <taxon>Pseudomonadati</taxon>
        <taxon>Pseudomonadota</taxon>
        <taxon>Gammaproteobacteria</taxon>
        <taxon>Alteromonadales</taxon>
        <taxon>Alteromonadaceae</taxon>
        <taxon>Paraglaciecola</taxon>
    </lineage>
</organism>
<dbReference type="EC" id="3.6.1.40" evidence="1"/>
<dbReference type="EMBL" id="CP000388">
    <property type="protein sequence ID" value="ABG42719.1"/>
    <property type="molecule type" value="Genomic_DNA"/>
</dbReference>
<dbReference type="RefSeq" id="WP_011576907.1">
    <property type="nucleotide sequence ID" value="NC_008228.1"/>
</dbReference>
<dbReference type="SMR" id="Q15N19"/>
<dbReference type="STRING" id="342610.Patl_4220"/>
<dbReference type="KEGG" id="pat:Patl_4220"/>
<dbReference type="eggNOG" id="COG0248">
    <property type="taxonomic scope" value="Bacteria"/>
</dbReference>
<dbReference type="HOGENOM" id="CLU_025908_4_0_6"/>
<dbReference type="OrthoDB" id="9793035at2"/>
<dbReference type="UniPathway" id="UPA00908">
    <property type="reaction ID" value="UER00885"/>
</dbReference>
<dbReference type="Proteomes" id="UP000001981">
    <property type="component" value="Chromosome"/>
</dbReference>
<dbReference type="GO" id="GO:0008894">
    <property type="term" value="F:guanosine-5'-triphosphate,3'-diphosphate diphosphatase activity"/>
    <property type="evidence" value="ECO:0007669"/>
    <property type="project" value="UniProtKB-UniRule"/>
</dbReference>
<dbReference type="GO" id="GO:0015974">
    <property type="term" value="P:guanosine pentaphosphate catabolic process"/>
    <property type="evidence" value="ECO:0007669"/>
    <property type="project" value="InterPro"/>
</dbReference>
<dbReference type="GO" id="GO:0015970">
    <property type="term" value="P:guanosine tetraphosphate biosynthetic process"/>
    <property type="evidence" value="ECO:0007669"/>
    <property type="project" value="UniProtKB-UniRule"/>
</dbReference>
<dbReference type="GO" id="GO:0015949">
    <property type="term" value="P:nucleobase-containing small molecule interconversion"/>
    <property type="evidence" value="ECO:0007669"/>
    <property type="project" value="TreeGrafter"/>
</dbReference>
<dbReference type="CDD" id="cd24117">
    <property type="entry name" value="ASKHA_NBD_EcGppA-like"/>
    <property type="match status" value="1"/>
</dbReference>
<dbReference type="FunFam" id="3.30.420.150:FF:000001">
    <property type="entry name" value="Guanosine-5'-triphosphate,3'-diphosphate pyrophosphatase"/>
    <property type="match status" value="1"/>
</dbReference>
<dbReference type="FunFam" id="3.30.420.40:FF:000023">
    <property type="entry name" value="Guanosine-5'-triphosphate,3'-diphosphate pyrophosphatase"/>
    <property type="match status" value="1"/>
</dbReference>
<dbReference type="Gene3D" id="3.30.420.40">
    <property type="match status" value="1"/>
</dbReference>
<dbReference type="Gene3D" id="3.30.420.150">
    <property type="entry name" value="Exopolyphosphatase. Domain 2"/>
    <property type="match status" value="1"/>
</dbReference>
<dbReference type="Gene3D" id="1.10.3210.10">
    <property type="entry name" value="Hypothetical protein af1432"/>
    <property type="match status" value="1"/>
</dbReference>
<dbReference type="HAMAP" id="MF_01550">
    <property type="entry name" value="GppA"/>
    <property type="match status" value="1"/>
</dbReference>
<dbReference type="InterPro" id="IPR043129">
    <property type="entry name" value="ATPase_NBD"/>
</dbReference>
<dbReference type="InterPro" id="IPR050273">
    <property type="entry name" value="GppA/Ppx_hydrolase"/>
</dbReference>
<dbReference type="InterPro" id="IPR023709">
    <property type="entry name" value="Guo-5TP_3DP_PyrP"/>
</dbReference>
<dbReference type="InterPro" id="IPR048950">
    <property type="entry name" value="Ppx_GppA_C"/>
</dbReference>
<dbReference type="InterPro" id="IPR003695">
    <property type="entry name" value="Ppx_GppA_N"/>
</dbReference>
<dbReference type="InterPro" id="IPR030673">
    <property type="entry name" value="PyroPPase_GppA_Ppx"/>
</dbReference>
<dbReference type="PANTHER" id="PTHR30005">
    <property type="entry name" value="EXOPOLYPHOSPHATASE"/>
    <property type="match status" value="1"/>
</dbReference>
<dbReference type="PANTHER" id="PTHR30005:SF0">
    <property type="entry name" value="RETROGRADE REGULATION PROTEIN 2"/>
    <property type="match status" value="1"/>
</dbReference>
<dbReference type="Pfam" id="PF02541">
    <property type="entry name" value="Ppx-GppA"/>
    <property type="match status" value="1"/>
</dbReference>
<dbReference type="Pfam" id="PF21447">
    <property type="entry name" value="Ppx-GppA_III"/>
    <property type="match status" value="1"/>
</dbReference>
<dbReference type="PIRSF" id="PIRSF001267">
    <property type="entry name" value="Pyrophosphatase_GppA_Ppx"/>
    <property type="match status" value="1"/>
</dbReference>
<dbReference type="SUPFAM" id="SSF53067">
    <property type="entry name" value="Actin-like ATPase domain"/>
    <property type="match status" value="2"/>
</dbReference>
<dbReference type="SUPFAM" id="SSF109604">
    <property type="entry name" value="HD-domain/PDEase-like"/>
    <property type="match status" value="1"/>
</dbReference>
<sequence length="503" mass="56404">MITSTRLPQNHPEELYAAVDLGSNSFHLVIVRVVAGSVQIIGKVKQKVRLAAGLDDNMMLDNESLERGWRCLETFAERLQDIPRDNIRVVATATLRLAKNADVFTVKAQQILDHTLSVISGEEEARQIYLGVAYTSANQGNSLVIDIGGASTEIIIGNDMTPIHLVSLNMGCVTFKERHFAGDVLSEENFAAAIDAAKAMVDAVADKFVCFDWQQCLGASGTPQAITEILVAQGISDAIRLDYLYNLRQQCIDCSTLDNLIIDGLDESRRIIFPSGLAILIALFESLSIRDMQISGGALREGLIYGMLENMQQNDRRMQTIHQHMQHFHIDSEQAERVTEVALTLFKQLSEQTDVDGIDGEAMLVAAAMLHETGLHIEYKLHHKHGAYILGHVPMVGYTNLQRDGIKTLVLNHRQQISPEVFDQNHSETRGIMRSLVRVLRLACILSIRRKDNLLPQFCLEVEENDWRLVFPEGWLKAHPLIDAELANEKWQQHKMGWHLTCE</sequence>
<proteinExistence type="inferred from homology"/>
<keyword id="KW-0378">Hydrolase</keyword>